<keyword id="KW-0963">Cytoplasm</keyword>
<keyword id="KW-0227">DNA damage</keyword>
<keyword id="KW-0234">DNA repair</keyword>
<keyword id="KW-0378">Hydrolase</keyword>
<keyword id="KW-1185">Reference proteome</keyword>
<protein>
    <recommendedName>
        <fullName evidence="1">Uracil-DNA glycosylase</fullName>
        <shortName evidence="1">UDG</shortName>
        <ecNumber evidence="1">3.2.2.27</ecNumber>
    </recommendedName>
</protein>
<feature type="chain" id="PRO_0000176097" description="Uracil-DNA glycosylase">
    <location>
        <begin position="1"/>
        <end position="226"/>
    </location>
</feature>
<feature type="active site" description="Proton acceptor" evidence="1">
    <location>
        <position position="64"/>
    </location>
</feature>
<evidence type="ECO:0000255" key="1">
    <source>
        <dbReference type="HAMAP-Rule" id="MF_00148"/>
    </source>
</evidence>
<dbReference type="EC" id="3.2.2.27" evidence="1"/>
<dbReference type="EMBL" id="AE009951">
    <property type="protein sequence ID" value="AAL95422.1"/>
    <property type="molecule type" value="Genomic_DNA"/>
</dbReference>
<dbReference type="RefSeq" id="NP_604123.1">
    <property type="nucleotide sequence ID" value="NC_003454.1"/>
</dbReference>
<dbReference type="RefSeq" id="WP_011016997.1">
    <property type="nucleotide sequence ID" value="NZ_CP028101.1"/>
</dbReference>
<dbReference type="SMR" id="Q8R634"/>
<dbReference type="FunCoup" id="Q8R634">
    <property type="interactions" value="275"/>
</dbReference>
<dbReference type="STRING" id="190304.FN1226"/>
<dbReference type="PaxDb" id="190304-FN1226"/>
<dbReference type="EnsemblBacteria" id="AAL95422">
    <property type="protein sequence ID" value="AAL95422"/>
    <property type="gene ID" value="FN1226"/>
</dbReference>
<dbReference type="GeneID" id="79784203"/>
<dbReference type="KEGG" id="fnu:FN1226"/>
<dbReference type="PATRIC" id="fig|190304.8.peg.1789"/>
<dbReference type="eggNOG" id="COG0692">
    <property type="taxonomic scope" value="Bacteria"/>
</dbReference>
<dbReference type="HOGENOM" id="CLU_032162_3_2_0"/>
<dbReference type="InParanoid" id="Q8R634"/>
<dbReference type="BioCyc" id="FNUC190304:G1FZS-1803-MONOMER"/>
<dbReference type="Proteomes" id="UP000002521">
    <property type="component" value="Chromosome"/>
</dbReference>
<dbReference type="GO" id="GO:0005737">
    <property type="term" value="C:cytoplasm"/>
    <property type="evidence" value="ECO:0007669"/>
    <property type="project" value="UniProtKB-SubCell"/>
</dbReference>
<dbReference type="GO" id="GO:0004844">
    <property type="term" value="F:uracil DNA N-glycosylase activity"/>
    <property type="evidence" value="ECO:0007669"/>
    <property type="project" value="UniProtKB-UniRule"/>
</dbReference>
<dbReference type="GO" id="GO:0097510">
    <property type="term" value="P:base-excision repair, AP site formation via deaminated base removal"/>
    <property type="evidence" value="ECO:0000318"/>
    <property type="project" value="GO_Central"/>
</dbReference>
<dbReference type="CDD" id="cd10027">
    <property type="entry name" value="UDG-F1-like"/>
    <property type="match status" value="1"/>
</dbReference>
<dbReference type="FunFam" id="3.40.470.10:FF:000001">
    <property type="entry name" value="Uracil-DNA glycosylase"/>
    <property type="match status" value="1"/>
</dbReference>
<dbReference type="Gene3D" id="3.40.470.10">
    <property type="entry name" value="Uracil-DNA glycosylase-like domain"/>
    <property type="match status" value="1"/>
</dbReference>
<dbReference type="HAMAP" id="MF_00148">
    <property type="entry name" value="UDG"/>
    <property type="match status" value="1"/>
</dbReference>
<dbReference type="InterPro" id="IPR002043">
    <property type="entry name" value="UDG_fam1"/>
</dbReference>
<dbReference type="InterPro" id="IPR018085">
    <property type="entry name" value="Ura-DNA_Glyclase_AS"/>
</dbReference>
<dbReference type="InterPro" id="IPR005122">
    <property type="entry name" value="Uracil-DNA_glycosylase-like"/>
</dbReference>
<dbReference type="InterPro" id="IPR036895">
    <property type="entry name" value="Uracil-DNA_glycosylase-like_sf"/>
</dbReference>
<dbReference type="NCBIfam" id="NF003588">
    <property type="entry name" value="PRK05254.1-1"/>
    <property type="match status" value="1"/>
</dbReference>
<dbReference type="NCBIfam" id="NF003589">
    <property type="entry name" value="PRK05254.1-2"/>
    <property type="match status" value="1"/>
</dbReference>
<dbReference type="NCBIfam" id="NF003591">
    <property type="entry name" value="PRK05254.1-4"/>
    <property type="match status" value="1"/>
</dbReference>
<dbReference type="NCBIfam" id="NF003592">
    <property type="entry name" value="PRK05254.1-5"/>
    <property type="match status" value="1"/>
</dbReference>
<dbReference type="NCBIfam" id="TIGR00628">
    <property type="entry name" value="ung"/>
    <property type="match status" value="1"/>
</dbReference>
<dbReference type="PANTHER" id="PTHR11264">
    <property type="entry name" value="URACIL-DNA GLYCOSYLASE"/>
    <property type="match status" value="1"/>
</dbReference>
<dbReference type="PANTHER" id="PTHR11264:SF0">
    <property type="entry name" value="URACIL-DNA GLYCOSYLASE"/>
    <property type="match status" value="1"/>
</dbReference>
<dbReference type="Pfam" id="PF03167">
    <property type="entry name" value="UDG"/>
    <property type="match status" value="1"/>
</dbReference>
<dbReference type="SMART" id="SM00986">
    <property type="entry name" value="UDG"/>
    <property type="match status" value="1"/>
</dbReference>
<dbReference type="SMART" id="SM00987">
    <property type="entry name" value="UreE_C"/>
    <property type="match status" value="1"/>
</dbReference>
<dbReference type="SUPFAM" id="SSF52141">
    <property type="entry name" value="Uracil-DNA glycosylase-like"/>
    <property type="match status" value="1"/>
</dbReference>
<dbReference type="PROSITE" id="PS00130">
    <property type="entry name" value="U_DNA_GLYCOSYLASE"/>
    <property type="match status" value="1"/>
</dbReference>
<gene>
    <name evidence="1" type="primary">ung</name>
    <name type="ordered locus">FN1226</name>
</gene>
<proteinExistence type="inferred from homology"/>
<name>UNG_FUSNN</name>
<sequence>MSKINNDWKEILEEEFEKEYFIKLKETLEEEYKNYTVYPPKRDILNAFFLTPYSEVKVVLLGQDPYHQRGQAHGLAFSVNYEIKTPPSLVNMYKELQDDLGLYIPNNGFLEKWSKQGVLLLNTTLTVRDSEANSHSKIGWQTFTDNVIKSLNEREKPVIFILWGNNAKSKEKFIDTNKHYILKGVHPSPLSANKGFFGCKHFSEANRILKNLGEKEIDWQIENKEI</sequence>
<organism>
    <name type="scientific">Fusobacterium nucleatum subsp. nucleatum (strain ATCC 25586 / DSM 15643 / BCRC 10681 / CIP 101130 / JCM 8532 / KCTC 2640 / LMG 13131 / VPI 4355)</name>
    <dbReference type="NCBI Taxonomy" id="190304"/>
    <lineage>
        <taxon>Bacteria</taxon>
        <taxon>Fusobacteriati</taxon>
        <taxon>Fusobacteriota</taxon>
        <taxon>Fusobacteriia</taxon>
        <taxon>Fusobacteriales</taxon>
        <taxon>Fusobacteriaceae</taxon>
        <taxon>Fusobacterium</taxon>
    </lineage>
</organism>
<accession>Q8R634</accession>
<comment type="function">
    <text evidence="1">Excises uracil residues from the DNA which can arise as a result of misincorporation of dUMP residues by DNA polymerase or due to deamination of cytosine.</text>
</comment>
<comment type="catalytic activity">
    <reaction evidence="1">
        <text>Hydrolyzes single-stranded DNA or mismatched double-stranded DNA and polynucleotides, releasing free uracil.</text>
        <dbReference type="EC" id="3.2.2.27"/>
    </reaction>
</comment>
<comment type="subcellular location">
    <subcellularLocation>
        <location evidence="1">Cytoplasm</location>
    </subcellularLocation>
</comment>
<comment type="similarity">
    <text evidence="1">Belongs to the uracil-DNA glycosylase (UDG) superfamily. UNG family.</text>
</comment>
<reference key="1">
    <citation type="journal article" date="2002" name="J. Bacteriol.">
        <title>Genome sequence and analysis of the oral bacterium Fusobacterium nucleatum strain ATCC 25586.</title>
        <authorList>
            <person name="Kapatral V."/>
            <person name="Anderson I."/>
            <person name="Ivanova N."/>
            <person name="Reznik G."/>
            <person name="Los T."/>
            <person name="Lykidis A."/>
            <person name="Bhattacharyya A."/>
            <person name="Bartman A."/>
            <person name="Gardner W."/>
            <person name="Grechkin G."/>
            <person name="Zhu L."/>
            <person name="Vasieva O."/>
            <person name="Chu L."/>
            <person name="Kogan Y."/>
            <person name="Chaga O."/>
            <person name="Goltsman E."/>
            <person name="Bernal A."/>
            <person name="Larsen N."/>
            <person name="D'Souza M."/>
            <person name="Walunas T."/>
            <person name="Pusch G."/>
            <person name="Haselkorn R."/>
            <person name="Fonstein M."/>
            <person name="Kyrpides N.C."/>
            <person name="Overbeek R."/>
        </authorList>
    </citation>
    <scope>NUCLEOTIDE SEQUENCE [LARGE SCALE GENOMIC DNA]</scope>
    <source>
        <strain>ATCC 25586 / DSM 15643 / BCRC 10681 / CIP 101130 / JCM 8532 / KCTC 2640 / LMG 13131 / VPI 4355</strain>
    </source>
</reference>